<protein>
    <recommendedName>
        <fullName evidence="2">Large ribosomal subunit protein bL27</fullName>
    </recommendedName>
    <alternativeName>
        <fullName evidence="4">50S ribosomal protein L27</fullName>
    </alternativeName>
</protein>
<comment type="PTM">
    <text evidence="1">The N-terminus is cleaved by ribosomal processing cysteine protease Prp.</text>
</comment>
<comment type="similarity">
    <text evidence="2">Belongs to the bacterial ribosomal protein bL27 family.</text>
</comment>
<keyword id="KW-0687">Ribonucleoprotein</keyword>
<keyword id="KW-0689">Ribosomal protein</keyword>
<sequence>MLRLDLQFFASKKGVGSTKNGRDSQSKRLGAKRADGQTVSGGSILYRQRGTKIYPGVNVGRGGDDTLYAKVDGVVRFERLGRDRKQVSVYPVAQEA</sequence>
<gene>
    <name evidence="2" type="primary">rpmA</name>
    <name type="ordered locus">BALH_4025</name>
</gene>
<dbReference type="EMBL" id="CP000485">
    <property type="protein sequence ID" value="ABK87242.1"/>
    <property type="molecule type" value="Genomic_DNA"/>
</dbReference>
<dbReference type="RefSeq" id="WP_000944957.1">
    <property type="nucleotide sequence ID" value="NC_008600.1"/>
</dbReference>
<dbReference type="SMR" id="A0RJ49"/>
<dbReference type="GeneID" id="92884982"/>
<dbReference type="KEGG" id="btl:BALH_4025"/>
<dbReference type="HOGENOM" id="CLU_095424_4_0_9"/>
<dbReference type="GO" id="GO:0022625">
    <property type="term" value="C:cytosolic large ribosomal subunit"/>
    <property type="evidence" value="ECO:0007669"/>
    <property type="project" value="TreeGrafter"/>
</dbReference>
<dbReference type="GO" id="GO:0003735">
    <property type="term" value="F:structural constituent of ribosome"/>
    <property type="evidence" value="ECO:0007669"/>
    <property type="project" value="InterPro"/>
</dbReference>
<dbReference type="GO" id="GO:0006412">
    <property type="term" value="P:translation"/>
    <property type="evidence" value="ECO:0007669"/>
    <property type="project" value="UniProtKB-UniRule"/>
</dbReference>
<dbReference type="FunFam" id="2.40.50.100:FF:000004">
    <property type="entry name" value="50S ribosomal protein L27"/>
    <property type="match status" value="1"/>
</dbReference>
<dbReference type="Gene3D" id="2.40.50.100">
    <property type="match status" value="1"/>
</dbReference>
<dbReference type="HAMAP" id="MF_00539">
    <property type="entry name" value="Ribosomal_bL27"/>
    <property type="match status" value="1"/>
</dbReference>
<dbReference type="InterPro" id="IPR001684">
    <property type="entry name" value="Ribosomal_bL27"/>
</dbReference>
<dbReference type="InterPro" id="IPR018261">
    <property type="entry name" value="Ribosomal_bL27_CS"/>
</dbReference>
<dbReference type="NCBIfam" id="TIGR00062">
    <property type="entry name" value="L27"/>
    <property type="match status" value="1"/>
</dbReference>
<dbReference type="PANTHER" id="PTHR15893:SF0">
    <property type="entry name" value="LARGE RIBOSOMAL SUBUNIT PROTEIN BL27M"/>
    <property type="match status" value="1"/>
</dbReference>
<dbReference type="PANTHER" id="PTHR15893">
    <property type="entry name" value="RIBOSOMAL PROTEIN L27"/>
    <property type="match status" value="1"/>
</dbReference>
<dbReference type="Pfam" id="PF01016">
    <property type="entry name" value="Ribosomal_L27"/>
    <property type="match status" value="1"/>
</dbReference>
<dbReference type="PRINTS" id="PR00063">
    <property type="entry name" value="RIBOSOMALL27"/>
</dbReference>
<dbReference type="SUPFAM" id="SSF110324">
    <property type="entry name" value="Ribosomal L27 protein-like"/>
    <property type="match status" value="1"/>
</dbReference>
<dbReference type="PROSITE" id="PS00831">
    <property type="entry name" value="RIBOSOMAL_L27"/>
    <property type="match status" value="1"/>
</dbReference>
<reference key="1">
    <citation type="journal article" date="2007" name="J. Bacteriol.">
        <title>The complete genome sequence of Bacillus thuringiensis Al Hakam.</title>
        <authorList>
            <person name="Challacombe J.F."/>
            <person name="Altherr M.R."/>
            <person name="Xie G."/>
            <person name="Bhotika S.S."/>
            <person name="Brown N."/>
            <person name="Bruce D."/>
            <person name="Campbell C.S."/>
            <person name="Campbell M.L."/>
            <person name="Chen J."/>
            <person name="Chertkov O."/>
            <person name="Cleland C."/>
            <person name="Dimitrijevic M."/>
            <person name="Doggett N.A."/>
            <person name="Fawcett J.J."/>
            <person name="Glavina T."/>
            <person name="Goodwin L.A."/>
            <person name="Green L.D."/>
            <person name="Han C.S."/>
            <person name="Hill K.K."/>
            <person name="Hitchcock P."/>
            <person name="Jackson P.J."/>
            <person name="Keim P."/>
            <person name="Kewalramani A.R."/>
            <person name="Longmire J."/>
            <person name="Lucas S."/>
            <person name="Malfatti S."/>
            <person name="Martinez D."/>
            <person name="McMurry K."/>
            <person name="Meincke L.J."/>
            <person name="Misra M."/>
            <person name="Moseman B.L."/>
            <person name="Mundt M."/>
            <person name="Munk A.C."/>
            <person name="Okinaka R.T."/>
            <person name="Parson-Quintana B."/>
            <person name="Reilly L.P."/>
            <person name="Richardson P."/>
            <person name="Robinson D.L."/>
            <person name="Saunders E."/>
            <person name="Tapia R."/>
            <person name="Tesmer J.G."/>
            <person name="Thayer N."/>
            <person name="Thompson L.S."/>
            <person name="Tice H."/>
            <person name="Ticknor L.O."/>
            <person name="Wills P.L."/>
            <person name="Gilna P."/>
            <person name="Brettin T.S."/>
        </authorList>
    </citation>
    <scope>NUCLEOTIDE SEQUENCE [LARGE SCALE GENOMIC DNA]</scope>
    <source>
        <strain>Al Hakam</strain>
    </source>
</reference>
<accession>A0RJ49</accession>
<name>RL27_BACAH</name>
<evidence type="ECO:0000250" key="1">
    <source>
        <dbReference type="UniProtKB" id="Q2FXT0"/>
    </source>
</evidence>
<evidence type="ECO:0000255" key="2">
    <source>
        <dbReference type="HAMAP-Rule" id="MF_00539"/>
    </source>
</evidence>
<evidence type="ECO:0000256" key="3">
    <source>
        <dbReference type="SAM" id="MobiDB-lite"/>
    </source>
</evidence>
<evidence type="ECO:0000305" key="4"/>
<proteinExistence type="inferred from homology"/>
<feature type="propeptide" id="PRO_0000459865" evidence="1">
    <location>
        <begin position="1"/>
        <end position="9"/>
    </location>
</feature>
<feature type="chain" id="PRO_1000017412" description="Large ribosomal subunit protein bL27">
    <location>
        <begin position="10"/>
        <end position="96"/>
    </location>
</feature>
<feature type="region of interest" description="Disordered" evidence="3">
    <location>
        <begin position="14"/>
        <end position="36"/>
    </location>
</feature>
<organism>
    <name type="scientific">Bacillus thuringiensis (strain Al Hakam)</name>
    <dbReference type="NCBI Taxonomy" id="412694"/>
    <lineage>
        <taxon>Bacteria</taxon>
        <taxon>Bacillati</taxon>
        <taxon>Bacillota</taxon>
        <taxon>Bacilli</taxon>
        <taxon>Bacillales</taxon>
        <taxon>Bacillaceae</taxon>
        <taxon>Bacillus</taxon>
        <taxon>Bacillus cereus group</taxon>
    </lineage>
</organism>